<comment type="function">
    <text evidence="1">One of the proteins required for the normal export of preproteins out of the cell cytoplasm. It is a molecular chaperone that binds to a subset of precursor proteins, maintaining them in a translocation-competent state. It also specifically binds to its receptor SecA.</text>
</comment>
<comment type="subunit">
    <text evidence="1">Homotetramer, a dimer of dimers. One homotetramer interacts with 1 SecA dimer.</text>
</comment>
<comment type="subcellular location">
    <subcellularLocation>
        <location evidence="1">Cytoplasm</location>
    </subcellularLocation>
</comment>
<comment type="similarity">
    <text evidence="1">Belongs to the SecB family.</text>
</comment>
<name>SECB_COLP3</name>
<evidence type="ECO:0000255" key="1">
    <source>
        <dbReference type="HAMAP-Rule" id="MF_00821"/>
    </source>
</evidence>
<sequence>MAEENQVENSEAAQQSPEFAIQRIYTKDVSFETPNSPAVFQLDWKPEIQLDLDTRSTKLADNTYEVVLSVTVTATVEDKTAFLAEVQQAGIFTIGNLPEAQLAHTIGAFCPTTLFPYARETVASLVNRGSFPQFNLTPVNFEGLYASYVQQRATQENVAQSSETH</sequence>
<protein>
    <recommendedName>
        <fullName evidence="1">Protein-export protein SecB</fullName>
    </recommendedName>
</protein>
<gene>
    <name evidence="1" type="primary">secB</name>
    <name type="ordered locus">CPS_4388</name>
</gene>
<accession>Q47VY5</accession>
<organism>
    <name type="scientific">Colwellia psychrerythraea (strain 34H / ATCC BAA-681)</name>
    <name type="common">Vibrio psychroerythus</name>
    <dbReference type="NCBI Taxonomy" id="167879"/>
    <lineage>
        <taxon>Bacteria</taxon>
        <taxon>Pseudomonadati</taxon>
        <taxon>Pseudomonadota</taxon>
        <taxon>Gammaproteobacteria</taxon>
        <taxon>Alteromonadales</taxon>
        <taxon>Colwelliaceae</taxon>
        <taxon>Colwellia</taxon>
    </lineage>
</organism>
<feature type="chain" id="PRO_0000055362" description="Protein-export protein SecB">
    <location>
        <begin position="1"/>
        <end position="165"/>
    </location>
</feature>
<keyword id="KW-0143">Chaperone</keyword>
<keyword id="KW-0963">Cytoplasm</keyword>
<keyword id="KW-0653">Protein transport</keyword>
<keyword id="KW-0811">Translocation</keyword>
<keyword id="KW-0813">Transport</keyword>
<reference key="1">
    <citation type="journal article" date="2005" name="Proc. Natl. Acad. Sci. U.S.A.">
        <title>The psychrophilic lifestyle as revealed by the genome sequence of Colwellia psychrerythraea 34H through genomic and proteomic analyses.</title>
        <authorList>
            <person name="Methe B.A."/>
            <person name="Nelson K.E."/>
            <person name="Deming J.W."/>
            <person name="Momen B."/>
            <person name="Melamud E."/>
            <person name="Zhang X."/>
            <person name="Moult J."/>
            <person name="Madupu R."/>
            <person name="Nelson W.C."/>
            <person name="Dodson R.J."/>
            <person name="Brinkac L.M."/>
            <person name="Daugherty S.C."/>
            <person name="Durkin A.S."/>
            <person name="DeBoy R.T."/>
            <person name="Kolonay J.F."/>
            <person name="Sullivan S.A."/>
            <person name="Zhou L."/>
            <person name="Davidsen T.M."/>
            <person name="Wu M."/>
            <person name="Huston A.L."/>
            <person name="Lewis M."/>
            <person name="Weaver B."/>
            <person name="Weidman J.F."/>
            <person name="Khouri H."/>
            <person name="Utterback T.R."/>
            <person name="Feldblyum T.V."/>
            <person name="Fraser C.M."/>
        </authorList>
    </citation>
    <scope>NUCLEOTIDE SEQUENCE [LARGE SCALE GENOMIC DNA]</scope>
    <source>
        <strain>34H / ATCC BAA-681</strain>
    </source>
</reference>
<dbReference type="EMBL" id="CP000083">
    <property type="protein sequence ID" value="AAZ27618.1"/>
    <property type="molecule type" value="Genomic_DNA"/>
</dbReference>
<dbReference type="RefSeq" id="WP_011045118.1">
    <property type="nucleotide sequence ID" value="NC_003910.7"/>
</dbReference>
<dbReference type="SMR" id="Q47VY5"/>
<dbReference type="STRING" id="167879.CPS_4388"/>
<dbReference type="KEGG" id="cps:CPS_4388"/>
<dbReference type="eggNOG" id="COG1952">
    <property type="taxonomic scope" value="Bacteria"/>
</dbReference>
<dbReference type="HOGENOM" id="CLU_111574_1_0_6"/>
<dbReference type="Proteomes" id="UP000000547">
    <property type="component" value="Chromosome"/>
</dbReference>
<dbReference type="GO" id="GO:0005737">
    <property type="term" value="C:cytoplasm"/>
    <property type="evidence" value="ECO:0007669"/>
    <property type="project" value="UniProtKB-SubCell"/>
</dbReference>
<dbReference type="GO" id="GO:0051082">
    <property type="term" value="F:unfolded protein binding"/>
    <property type="evidence" value="ECO:0007669"/>
    <property type="project" value="InterPro"/>
</dbReference>
<dbReference type="GO" id="GO:0006457">
    <property type="term" value="P:protein folding"/>
    <property type="evidence" value="ECO:0007669"/>
    <property type="project" value="UniProtKB-UniRule"/>
</dbReference>
<dbReference type="GO" id="GO:0051262">
    <property type="term" value="P:protein tetramerization"/>
    <property type="evidence" value="ECO:0007669"/>
    <property type="project" value="InterPro"/>
</dbReference>
<dbReference type="GO" id="GO:0015031">
    <property type="term" value="P:protein transport"/>
    <property type="evidence" value="ECO:0007669"/>
    <property type="project" value="UniProtKB-UniRule"/>
</dbReference>
<dbReference type="Gene3D" id="3.10.420.10">
    <property type="entry name" value="SecB-like"/>
    <property type="match status" value="1"/>
</dbReference>
<dbReference type="HAMAP" id="MF_00821">
    <property type="entry name" value="SecB"/>
    <property type="match status" value="1"/>
</dbReference>
<dbReference type="InterPro" id="IPR003708">
    <property type="entry name" value="SecB"/>
</dbReference>
<dbReference type="InterPro" id="IPR035958">
    <property type="entry name" value="SecB-like_sf"/>
</dbReference>
<dbReference type="NCBIfam" id="NF004393">
    <property type="entry name" value="PRK05751.1-4"/>
    <property type="match status" value="1"/>
</dbReference>
<dbReference type="NCBIfam" id="TIGR00809">
    <property type="entry name" value="secB"/>
    <property type="match status" value="1"/>
</dbReference>
<dbReference type="PANTHER" id="PTHR36918">
    <property type="match status" value="1"/>
</dbReference>
<dbReference type="PANTHER" id="PTHR36918:SF1">
    <property type="entry name" value="PROTEIN-EXPORT PROTEIN SECB"/>
    <property type="match status" value="1"/>
</dbReference>
<dbReference type="Pfam" id="PF02556">
    <property type="entry name" value="SecB"/>
    <property type="match status" value="1"/>
</dbReference>
<dbReference type="PRINTS" id="PR01594">
    <property type="entry name" value="SECBCHAPRONE"/>
</dbReference>
<dbReference type="SUPFAM" id="SSF54611">
    <property type="entry name" value="SecB-like"/>
    <property type="match status" value="1"/>
</dbReference>
<proteinExistence type="inferred from homology"/>